<keyword id="KW-0032">Aminotransferase</keyword>
<keyword id="KW-0315">Glutamine amidotransferase</keyword>
<keyword id="KW-0597">Phosphoprotein</keyword>
<keyword id="KW-1185">Reference proteome</keyword>
<keyword id="KW-0677">Repeat</keyword>
<keyword id="KW-0808">Transferase</keyword>
<protein>
    <recommendedName>
        <fullName>Glutamine--fructose-6-phosphate aminotransferase [isomerizing] 2</fullName>
        <ecNumber evidence="4">2.6.1.16</ecNumber>
    </recommendedName>
    <alternativeName>
        <fullName>D-fructose-6-phosphate amidotransferase 2</fullName>
    </alternativeName>
    <alternativeName>
        <fullName>Glutamine:fructose-6-phosphate amidotransferase 2</fullName>
        <shortName>GFAT 2</shortName>
        <shortName>GFAT2</shortName>
    </alternativeName>
    <alternativeName>
        <fullName>Hexosephosphate aminotransferase 2</fullName>
    </alternativeName>
</protein>
<dbReference type="EC" id="2.6.1.16" evidence="4"/>
<dbReference type="EMBL" id="BC123624">
    <property type="protein sequence ID" value="AAI23625.1"/>
    <property type="molecule type" value="mRNA"/>
</dbReference>
<dbReference type="RefSeq" id="NP_001070351.1">
    <property type="nucleotide sequence ID" value="NM_001076883.1"/>
</dbReference>
<dbReference type="SMR" id="Q08DQ2"/>
<dbReference type="FunCoup" id="Q08DQ2">
    <property type="interactions" value="353"/>
</dbReference>
<dbReference type="STRING" id="9913.ENSBTAP00000002867"/>
<dbReference type="MEROPS" id="C44.975"/>
<dbReference type="PaxDb" id="9913-ENSBTAP00000002867"/>
<dbReference type="GeneID" id="530101"/>
<dbReference type="KEGG" id="bta:530101"/>
<dbReference type="CTD" id="9945"/>
<dbReference type="eggNOG" id="KOG1268">
    <property type="taxonomic scope" value="Eukaryota"/>
</dbReference>
<dbReference type="HOGENOM" id="CLU_012520_5_2_1"/>
<dbReference type="InParanoid" id="Q08DQ2"/>
<dbReference type="OrthoDB" id="15235at2759"/>
<dbReference type="TreeFam" id="TF300864"/>
<dbReference type="SABIO-RK" id="Q08DQ2"/>
<dbReference type="UniPathway" id="UPA00113">
    <property type="reaction ID" value="UER00528"/>
</dbReference>
<dbReference type="Proteomes" id="UP000009136">
    <property type="component" value="Unplaced"/>
</dbReference>
<dbReference type="GO" id="GO:0097367">
    <property type="term" value="F:carbohydrate derivative binding"/>
    <property type="evidence" value="ECO:0007669"/>
    <property type="project" value="InterPro"/>
</dbReference>
<dbReference type="GO" id="GO:0004360">
    <property type="term" value="F:glutamine-fructose-6-phosphate transaminase (isomerizing) activity"/>
    <property type="evidence" value="ECO:0000318"/>
    <property type="project" value="GO_Central"/>
</dbReference>
<dbReference type="GO" id="GO:0006002">
    <property type="term" value="P:fructose 6-phosphate metabolic process"/>
    <property type="evidence" value="ECO:0000318"/>
    <property type="project" value="GO_Central"/>
</dbReference>
<dbReference type="GO" id="GO:0006487">
    <property type="term" value="P:protein N-linked glycosylation"/>
    <property type="evidence" value="ECO:0000318"/>
    <property type="project" value="GO_Central"/>
</dbReference>
<dbReference type="GO" id="GO:0006048">
    <property type="term" value="P:UDP-N-acetylglucosamine biosynthetic process"/>
    <property type="evidence" value="ECO:0007669"/>
    <property type="project" value="UniProtKB-UniPathway"/>
</dbReference>
<dbReference type="GO" id="GO:0006047">
    <property type="term" value="P:UDP-N-acetylglucosamine metabolic process"/>
    <property type="evidence" value="ECO:0000318"/>
    <property type="project" value="GO_Central"/>
</dbReference>
<dbReference type="CDD" id="cd00714">
    <property type="entry name" value="GFAT"/>
    <property type="match status" value="1"/>
</dbReference>
<dbReference type="CDD" id="cd05008">
    <property type="entry name" value="SIS_GlmS_GlmD_1"/>
    <property type="match status" value="1"/>
</dbReference>
<dbReference type="CDD" id="cd05009">
    <property type="entry name" value="SIS_GlmS_GlmD_2"/>
    <property type="match status" value="1"/>
</dbReference>
<dbReference type="FunFam" id="3.40.50.10490:FF:000001">
    <property type="entry name" value="Glutamine--fructose-6-phosphate aminotransferase [isomerizing]"/>
    <property type="match status" value="1"/>
</dbReference>
<dbReference type="FunFam" id="3.40.50.10490:FF:000126">
    <property type="entry name" value="Glutamine--fructose-6-phosphate aminotransferase [isomerizing] 1"/>
    <property type="match status" value="1"/>
</dbReference>
<dbReference type="Gene3D" id="3.40.50.10490">
    <property type="entry name" value="Glucose-6-phosphate isomerase like protein, domain 1"/>
    <property type="match status" value="2"/>
</dbReference>
<dbReference type="Gene3D" id="3.60.20.10">
    <property type="entry name" value="Glutamine Phosphoribosylpyrophosphate, subunit 1, domain 1"/>
    <property type="match status" value="1"/>
</dbReference>
<dbReference type="InterPro" id="IPR017932">
    <property type="entry name" value="GATase_2_dom"/>
</dbReference>
<dbReference type="InterPro" id="IPR005855">
    <property type="entry name" value="GFAT"/>
</dbReference>
<dbReference type="InterPro" id="IPR047084">
    <property type="entry name" value="GFAT_N"/>
</dbReference>
<dbReference type="InterPro" id="IPR035466">
    <property type="entry name" value="GlmS/AgaS_SIS"/>
</dbReference>
<dbReference type="InterPro" id="IPR035490">
    <property type="entry name" value="GlmS/FrlB_SIS"/>
</dbReference>
<dbReference type="InterPro" id="IPR029055">
    <property type="entry name" value="Ntn_hydrolases_N"/>
</dbReference>
<dbReference type="InterPro" id="IPR001347">
    <property type="entry name" value="SIS_dom"/>
</dbReference>
<dbReference type="InterPro" id="IPR046348">
    <property type="entry name" value="SIS_dom_sf"/>
</dbReference>
<dbReference type="NCBIfam" id="TIGR01135">
    <property type="entry name" value="glmS"/>
    <property type="match status" value="1"/>
</dbReference>
<dbReference type="NCBIfam" id="NF001484">
    <property type="entry name" value="PRK00331.1"/>
    <property type="match status" value="1"/>
</dbReference>
<dbReference type="PANTHER" id="PTHR10937">
    <property type="entry name" value="GLUCOSAMINE--FRUCTOSE-6-PHOSPHATE AMINOTRANSFERASE, ISOMERIZING"/>
    <property type="match status" value="1"/>
</dbReference>
<dbReference type="PANTHER" id="PTHR10937:SF10">
    <property type="entry name" value="GLUTAMINE--FRUCTOSE-6-PHOSPHATE AMINOTRANSFERASE [ISOMERIZING] 2"/>
    <property type="match status" value="1"/>
</dbReference>
<dbReference type="Pfam" id="PF13522">
    <property type="entry name" value="GATase_6"/>
    <property type="match status" value="1"/>
</dbReference>
<dbReference type="Pfam" id="PF01380">
    <property type="entry name" value="SIS"/>
    <property type="match status" value="2"/>
</dbReference>
<dbReference type="SUPFAM" id="SSF56235">
    <property type="entry name" value="N-terminal nucleophile aminohydrolases (Ntn hydrolases)"/>
    <property type="match status" value="1"/>
</dbReference>
<dbReference type="SUPFAM" id="SSF53697">
    <property type="entry name" value="SIS domain"/>
    <property type="match status" value="1"/>
</dbReference>
<dbReference type="PROSITE" id="PS51278">
    <property type="entry name" value="GATASE_TYPE_2"/>
    <property type="match status" value="1"/>
</dbReference>
<dbReference type="PROSITE" id="PS51464">
    <property type="entry name" value="SIS"/>
    <property type="match status" value="2"/>
</dbReference>
<accession>Q08DQ2</accession>
<gene>
    <name type="primary">GFPT2</name>
</gene>
<sequence>MCGIFAYMNYRVPRTRKEIFETLIKGLQRLEYRGYDSAGVAIDGNNNEVKERHIQLVKKRGNVKALDEELYKQDSMDLKVEFETHFGIAHTRWATHGVPSAVNSHPQRSDKGNEFVVIHNGIITNYKDLRKFLESKGYEFESETDTETIAKLIKYVFDNRETEDITFSTLVERVIQQLEGAFALVFKSIHYPGEAVATRRGSPLLIGVRSKYKLSTEQIPVLYRTRNIENVKNICKTRMKRLDSSTCLHAVGNKAVEFFFASDASAIIEHTNRVIFLEDDDIAAVADGKLSIHRVKRLASDDPSRAIQTLQMELQQIMKGNFSAFMQKEIFEQPESVFNTMRGRVNFETNTVLLGGLKDHLKEIRRCRRLIVIGCGTSYHAAVATRQVLEELTELPVMVELASDFLDRNTPVFRDDVCFFISQSGETADTLLALRYCKDRRALTVGVTNTVGSSISRETDCGVHINAGPEIGVASTKAYTSQFISLVMFGLMMSEDRISLQNRRREIIHGLKSLPELIKEVLSLDEKIHDLALELYTQRSLLVMGRGYNYATCLEGALKIKEITYMHSEGILAGELKHGPLALIDKQMPVIMVIMKDPCFAKCQNALQQVTARQGRPIILCSKDDTESSKFAYKTIELPHTVDCLQGILSVIPLQLLSFHLAVLRGYDVDFPRNLAKSVTVE</sequence>
<feature type="initiator methionine" description="Removed" evidence="1">
    <location>
        <position position="1"/>
    </location>
</feature>
<feature type="chain" id="PRO_0000287357" description="Glutamine--fructose-6-phosphate aminotransferase [isomerizing] 2">
    <location>
        <begin position="2"/>
        <end position="682"/>
    </location>
</feature>
<feature type="domain" description="Glutamine amidotransferase type-2" evidence="6">
    <location>
        <begin position="2"/>
        <end position="288"/>
    </location>
</feature>
<feature type="domain" description="SIS 1" evidence="7">
    <location>
        <begin position="360"/>
        <end position="499"/>
    </location>
</feature>
<feature type="domain" description="SIS 2" evidence="7">
    <location>
        <begin position="531"/>
        <end position="672"/>
    </location>
</feature>
<feature type="active site" description="For GATase activity" evidence="3">
    <location>
        <position position="2"/>
    </location>
</feature>
<feature type="binding site" evidence="5">
    <location>
        <begin position="377"/>
        <end position="378"/>
    </location>
    <ligand>
        <name>substrate</name>
    </ligand>
</feature>
<feature type="binding site" evidence="5">
    <location>
        <begin position="422"/>
        <end position="424"/>
    </location>
    <ligand>
        <name>substrate</name>
    </ligand>
</feature>
<feature type="binding site" evidence="5">
    <location>
        <position position="427"/>
    </location>
    <ligand>
        <name>substrate</name>
    </ligand>
</feature>
<feature type="binding site" evidence="5">
    <location>
        <position position="578"/>
    </location>
    <ligand>
        <name>substrate</name>
    </ligand>
</feature>
<feature type="modified residue" description="Phosphoserine" evidence="2">
    <location>
        <position position="244"/>
    </location>
</feature>
<comment type="function">
    <text evidence="1">Controls the flux of glucose into the hexosamine pathway. Most likely involved in regulating the availability of precursors for N- and O-linked glycosylation of proteins (By similarity).</text>
</comment>
<comment type="catalytic activity">
    <reaction evidence="4">
        <text>D-fructose 6-phosphate + L-glutamine = D-glucosamine 6-phosphate + L-glutamate</text>
        <dbReference type="Rhea" id="RHEA:13237"/>
        <dbReference type="ChEBI" id="CHEBI:29985"/>
        <dbReference type="ChEBI" id="CHEBI:58359"/>
        <dbReference type="ChEBI" id="CHEBI:58725"/>
        <dbReference type="ChEBI" id="CHEBI:61527"/>
        <dbReference type="EC" id="2.6.1.16"/>
    </reaction>
</comment>
<comment type="pathway">
    <text evidence="4">Nucleotide-sugar biosynthesis; UDP-N-acetyl-alpha-D-glucosamine biosynthesis; alpha-D-glucosamine 6-phosphate from D-fructose 6-phosphate: step 1/1.</text>
</comment>
<reference key="1">
    <citation type="submission" date="2006-09" db="EMBL/GenBank/DDBJ databases">
        <authorList>
            <consortium name="NIH - Mammalian Gene Collection (MGC) project"/>
        </authorList>
    </citation>
    <scope>NUCLEOTIDE SEQUENCE [LARGE SCALE MRNA]</scope>
    <source>
        <strain>Hereford</strain>
        <tissue>Ascending colon</tissue>
    </source>
</reference>
<evidence type="ECO:0000250" key="1"/>
<evidence type="ECO:0000250" key="2">
    <source>
        <dbReference type="UniProtKB" id="O94808"/>
    </source>
</evidence>
<evidence type="ECO:0000250" key="3">
    <source>
        <dbReference type="UniProtKB" id="P14742"/>
    </source>
</evidence>
<evidence type="ECO:0000250" key="4">
    <source>
        <dbReference type="UniProtKB" id="P82808"/>
    </source>
</evidence>
<evidence type="ECO:0000250" key="5">
    <source>
        <dbReference type="UniProtKB" id="Q06210"/>
    </source>
</evidence>
<evidence type="ECO:0000255" key="6">
    <source>
        <dbReference type="PROSITE-ProRule" id="PRU00609"/>
    </source>
</evidence>
<evidence type="ECO:0000255" key="7">
    <source>
        <dbReference type="PROSITE-ProRule" id="PRU00797"/>
    </source>
</evidence>
<name>GFPT2_BOVIN</name>
<organism>
    <name type="scientific">Bos taurus</name>
    <name type="common">Bovine</name>
    <dbReference type="NCBI Taxonomy" id="9913"/>
    <lineage>
        <taxon>Eukaryota</taxon>
        <taxon>Metazoa</taxon>
        <taxon>Chordata</taxon>
        <taxon>Craniata</taxon>
        <taxon>Vertebrata</taxon>
        <taxon>Euteleostomi</taxon>
        <taxon>Mammalia</taxon>
        <taxon>Eutheria</taxon>
        <taxon>Laurasiatheria</taxon>
        <taxon>Artiodactyla</taxon>
        <taxon>Ruminantia</taxon>
        <taxon>Pecora</taxon>
        <taxon>Bovidae</taxon>
        <taxon>Bovinae</taxon>
        <taxon>Bos</taxon>
    </lineage>
</organism>
<proteinExistence type="evidence at transcript level"/>